<organism>
    <name type="scientific">Mus musculus</name>
    <name type="common">Mouse</name>
    <dbReference type="NCBI Taxonomy" id="10090"/>
    <lineage>
        <taxon>Eukaryota</taxon>
        <taxon>Metazoa</taxon>
        <taxon>Chordata</taxon>
        <taxon>Craniata</taxon>
        <taxon>Vertebrata</taxon>
        <taxon>Euteleostomi</taxon>
        <taxon>Mammalia</taxon>
        <taxon>Eutheria</taxon>
        <taxon>Euarchontoglires</taxon>
        <taxon>Glires</taxon>
        <taxon>Rodentia</taxon>
        <taxon>Myomorpha</taxon>
        <taxon>Muroidea</taxon>
        <taxon>Muridae</taxon>
        <taxon>Murinae</taxon>
        <taxon>Mus</taxon>
        <taxon>Mus</taxon>
    </lineage>
</organism>
<sequence>MESPNLGDNRVRGESLVPDPPWDRCKEDIAVGLGGVGEDGKDLVISSERSSLLQEPTASTLSSTTATEGHKPVPCGWERVVKQRLSGKTAGKFDVYFISPQGLKFRSKRSLANYLLKNGETFLKPEDFNFTVLPKGSINPGYKHQSLAALTSLQPNETDVSKQNLKTRSKWKTDVLPLPSGTSESPESSGLSNSNSACLLLREHRDIQDVDSEKRRKSKRKVTVLKGTASQKTKQKCRKSLLESTQRNRKRASVVQKVGADRELVPQESQLNRTLCPADACARETVGLAGEEKSPSPGLDLCFIQVTSGTTNKFHSTEAAGEANREQTFLESEEIRSKGDRKGEAHLHTGVLQDGSEMPSCSQAKKHFTSETFQEDSIPRTQVEKRKTSLYFSSKYNKEALSPPRRKSFKKWTPPRSPFNLVQEILFHDPWKLLIATIFLNRTSGKMAIPVLWEFLEKYPSAEVARAADWRDVSELLKPLGLYDLRAKTIIKFSDEYLTKQWRYPIELHGIGKYGNDSYRIFCVNEWKQVHPEDHKLNKYHDWLWENHEKLSLS</sequence>
<name>MBD4_MOUSE</name>
<comment type="function">
    <text evidence="5">Mismatch-specific DNA N-glycosylase involved in DNA repair. Has thymine glycosylase activity and is specific for G:T mismatches within methylated and unmethylated CpG sites. Can also remove uracil or 5-fluorouracil in G:U mismatches. Has no lyase activity. Was first identified as methyl-CpG-binding protein.</text>
</comment>
<comment type="subunit">
    <text evidence="1">Interacts with MLH1.</text>
</comment>
<comment type="subcellular location">
    <subcellularLocation>
        <location evidence="5">Nucleus</location>
    </subcellularLocation>
    <text>Nuclear, in discrete foci.</text>
</comment>
<accession>Q9Z2D7</accession>
<accession>Q792D2</accession>
<accession>Q8R3R3</accession>
<protein>
    <recommendedName>
        <fullName>Methyl-CpG-binding domain protein 4</fullName>
        <ecNumber>3.2.2.-</ecNumber>
    </recommendedName>
    <alternativeName>
        <fullName>Methyl-CpG-binding protein MBD4</fullName>
    </alternativeName>
    <alternativeName>
        <fullName>Mismatch-specific DNA N-glycosylase</fullName>
    </alternativeName>
</protein>
<gene>
    <name type="primary">Mbd4</name>
</gene>
<reference key="1">
    <citation type="journal article" date="1998" name="Mol. Cell. Biol.">
        <title>Identification and characterization of a family of mammalian methyl-CpG binding proteins.</title>
        <authorList>
            <person name="Hendrich B."/>
            <person name="Bird A."/>
        </authorList>
    </citation>
    <scope>NUCLEOTIDE SEQUENCE</scope>
    <scope>FUNCTION</scope>
    <scope>SUBCELLULAR LOCATION</scope>
</reference>
<reference key="2">
    <citation type="journal article" date="1999" name="Mamm. Genome">
        <title>Genomic structure and chromosomal mapping of the murine and human mbd1, mbd2, mbd3, and mbd4 genes.</title>
        <authorList>
            <person name="Hendrich B."/>
            <person name="Abbott C."/>
            <person name="McQueen H."/>
            <person name="Chambers D."/>
            <person name="Cross S.H."/>
            <person name="Bird A."/>
        </authorList>
    </citation>
    <scope>NUCLEOTIDE SEQUENCE</scope>
    <source>
        <strain>129</strain>
    </source>
</reference>
<reference key="3">
    <citation type="journal article" date="2004" name="Genome Res.">
        <title>The status, quality, and expansion of the NIH full-length cDNA project: the Mammalian Gene Collection (MGC).</title>
        <authorList>
            <consortium name="The MGC Project Team"/>
        </authorList>
    </citation>
    <scope>NUCLEOTIDE SEQUENCE [LARGE SCALE MRNA]</scope>
</reference>
<reference key="4">
    <citation type="journal article" date="2003" name="J. Biol. Chem.">
        <title>Mismatch repair in methylated DNA. Structure and activity of the mismatch-specific thymine glycosylase domain of methyl-CpG-binding protein MBD4.</title>
        <authorList>
            <person name="Wu P."/>
            <person name="Qiu C."/>
            <person name="Sohail A."/>
            <person name="Zhang X."/>
            <person name="Bhagwat A.S."/>
            <person name="Cheng X."/>
        </authorList>
    </citation>
    <scope>X-RAY CRYSTALLOGRAPHY (2.1 ANGSTROMS) OF 411-554</scope>
</reference>
<evidence type="ECO:0000250" key="1"/>
<evidence type="ECO:0000250" key="2">
    <source>
        <dbReference type="UniProtKB" id="O95243"/>
    </source>
</evidence>
<evidence type="ECO:0000255" key="3">
    <source>
        <dbReference type="PROSITE-ProRule" id="PRU00338"/>
    </source>
</evidence>
<evidence type="ECO:0000256" key="4">
    <source>
        <dbReference type="SAM" id="MobiDB-lite"/>
    </source>
</evidence>
<evidence type="ECO:0000269" key="5">
    <source>
    </source>
</evidence>
<evidence type="ECO:0000305" key="6"/>
<evidence type="ECO:0007829" key="7">
    <source>
        <dbReference type="PDB" id="1NGN"/>
    </source>
</evidence>
<evidence type="ECO:0007829" key="8">
    <source>
        <dbReference type="PDB" id="3VXV"/>
    </source>
</evidence>
<evidence type="ECO:0007829" key="9">
    <source>
        <dbReference type="PDB" id="3VYQ"/>
    </source>
</evidence>
<dbReference type="EC" id="3.2.2.-"/>
<dbReference type="EMBL" id="AF072249">
    <property type="protein sequence ID" value="AAC68878.1"/>
    <property type="molecule type" value="mRNA"/>
</dbReference>
<dbReference type="EMBL" id="AF120996">
    <property type="protein sequence ID" value="AAD56595.1"/>
    <property type="molecule type" value="Genomic_DNA"/>
</dbReference>
<dbReference type="EMBL" id="BC024812">
    <property type="protein sequence ID" value="AAH24812.1"/>
    <property type="molecule type" value="mRNA"/>
</dbReference>
<dbReference type="CCDS" id="CCDS39603.1"/>
<dbReference type="RefSeq" id="NP_034904.2">
    <property type="nucleotide sequence ID" value="NM_010774.2"/>
</dbReference>
<dbReference type="PDB" id="1NGN">
    <property type="method" value="X-ray"/>
    <property type="resolution" value="2.10 A"/>
    <property type="chains" value="A=400-554"/>
</dbReference>
<dbReference type="PDB" id="3VXV">
    <property type="method" value="X-ray"/>
    <property type="resolution" value="2.00 A"/>
    <property type="chains" value="A=69-136"/>
</dbReference>
<dbReference type="PDB" id="3VXX">
    <property type="method" value="X-ray"/>
    <property type="resolution" value="2.20 A"/>
    <property type="chains" value="A=69-136"/>
</dbReference>
<dbReference type="PDB" id="3VYB">
    <property type="method" value="X-ray"/>
    <property type="resolution" value="2.40 A"/>
    <property type="chains" value="A=69-136"/>
</dbReference>
<dbReference type="PDB" id="3VYQ">
    <property type="method" value="X-ray"/>
    <property type="resolution" value="2.52 A"/>
    <property type="chains" value="A/D=63-136"/>
</dbReference>
<dbReference type="PDB" id="4EVV">
    <property type="method" value="X-ray"/>
    <property type="resolution" value="2.39 A"/>
    <property type="chains" value="A=411-554"/>
</dbReference>
<dbReference type="PDB" id="4EW0">
    <property type="method" value="X-ray"/>
    <property type="resolution" value="2.39 A"/>
    <property type="chains" value="A=411-554"/>
</dbReference>
<dbReference type="PDB" id="4EW4">
    <property type="method" value="X-ray"/>
    <property type="resolution" value="2.79 A"/>
    <property type="chains" value="A=411-554"/>
</dbReference>
<dbReference type="PDBsum" id="1NGN"/>
<dbReference type="PDBsum" id="3VXV"/>
<dbReference type="PDBsum" id="3VXX"/>
<dbReference type="PDBsum" id="3VYB"/>
<dbReference type="PDBsum" id="3VYQ"/>
<dbReference type="PDBsum" id="4EVV"/>
<dbReference type="PDBsum" id="4EW0"/>
<dbReference type="PDBsum" id="4EW4"/>
<dbReference type="SMR" id="Q9Z2D7"/>
<dbReference type="BioGRID" id="201333">
    <property type="interactions" value="2"/>
</dbReference>
<dbReference type="FunCoup" id="Q9Z2D7">
    <property type="interactions" value="2642"/>
</dbReference>
<dbReference type="STRING" id="10090.ENSMUSP00000032469"/>
<dbReference type="iPTMnet" id="Q9Z2D7"/>
<dbReference type="PhosphoSitePlus" id="Q9Z2D7"/>
<dbReference type="PaxDb" id="10090-ENSMUSP00000032469"/>
<dbReference type="PeptideAtlas" id="Q9Z2D7"/>
<dbReference type="ProteomicsDB" id="295802"/>
<dbReference type="DNASU" id="17193"/>
<dbReference type="GeneID" id="17193"/>
<dbReference type="KEGG" id="mmu:17193"/>
<dbReference type="UCSC" id="uc009dje.2">
    <property type="organism name" value="mouse"/>
</dbReference>
<dbReference type="AGR" id="MGI:1333850"/>
<dbReference type="CTD" id="8930"/>
<dbReference type="MGI" id="MGI:1333850">
    <property type="gene designation" value="Mbd4"/>
</dbReference>
<dbReference type="eggNOG" id="KOG4161">
    <property type="taxonomic scope" value="Eukaryota"/>
</dbReference>
<dbReference type="InParanoid" id="Q9Z2D7"/>
<dbReference type="OrthoDB" id="10265068at2759"/>
<dbReference type="PhylomeDB" id="Q9Z2D7"/>
<dbReference type="TreeFam" id="TF329176"/>
<dbReference type="Reactome" id="R-MMU-110329">
    <property type="pathway name" value="Cleavage of the damaged pyrimidine"/>
</dbReference>
<dbReference type="Reactome" id="R-MMU-110357">
    <property type="pathway name" value="Displacement of DNA glycosylase by APEX1"/>
</dbReference>
<dbReference type="BioGRID-ORCS" id="17193">
    <property type="hits" value="1 hit in 120 CRISPR screens"/>
</dbReference>
<dbReference type="ChiTaRS" id="Mbd4">
    <property type="organism name" value="mouse"/>
</dbReference>
<dbReference type="EvolutionaryTrace" id="Q9Z2D7"/>
<dbReference type="PRO" id="PR:Q9Z2D7"/>
<dbReference type="Proteomes" id="UP000000589">
    <property type="component" value="Unplaced"/>
</dbReference>
<dbReference type="RNAct" id="Q9Z2D7">
    <property type="molecule type" value="protein"/>
</dbReference>
<dbReference type="GO" id="GO:0000785">
    <property type="term" value="C:chromatin"/>
    <property type="evidence" value="ECO:0000314"/>
    <property type="project" value="MGI"/>
</dbReference>
<dbReference type="GO" id="GO:0005737">
    <property type="term" value="C:cytoplasm"/>
    <property type="evidence" value="ECO:0000314"/>
    <property type="project" value="MGI"/>
</dbReference>
<dbReference type="GO" id="GO:0005634">
    <property type="term" value="C:nucleus"/>
    <property type="evidence" value="ECO:0000314"/>
    <property type="project" value="MGI"/>
</dbReference>
<dbReference type="GO" id="GO:0003677">
    <property type="term" value="F:DNA binding"/>
    <property type="evidence" value="ECO:0000314"/>
    <property type="project" value="MGI"/>
</dbReference>
<dbReference type="GO" id="GO:0008263">
    <property type="term" value="F:pyrimidine-specific mismatch base pair DNA N-glycosylase activity"/>
    <property type="evidence" value="ECO:0000266"/>
    <property type="project" value="MGI"/>
</dbReference>
<dbReference type="GO" id="GO:0006974">
    <property type="term" value="P:DNA damage response"/>
    <property type="evidence" value="ECO:0000315"/>
    <property type="project" value="MGI"/>
</dbReference>
<dbReference type="GO" id="GO:0006281">
    <property type="term" value="P:DNA repair"/>
    <property type="evidence" value="ECO:0007669"/>
    <property type="project" value="UniProtKB-KW"/>
</dbReference>
<dbReference type="GO" id="GO:0008630">
    <property type="term" value="P:intrinsic apoptotic signaling pathway in response to DNA damage"/>
    <property type="evidence" value="ECO:0000315"/>
    <property type="project" value="MGI"/>
</dbReference>
<dbReference type="GO" id="GO:0007095">
    <property type="term" value="P:mitotic G2 DNA damage checkpoint signaling"/>
    <property type="evidence" value="ECO:0000315"/>
    <property type="project" value="MGI"/>
</dbReference>
<dbReference type="GO" id="GO:0009314">
    <property type="term" value="P:response to radiation"/>
    <property type="evidence" value="ECO:0000315"/>
    <property type="project" value="MGI"/>
</dbReference>
<dbReference type="CDD" id="cd01396">
    <property type="entry name" value="MeCP2_MBD"/>
    <property type="match status" value="1"/>
</dbReference>
<dbReference type="FunFam" id="1.10.340.30:FF:000051">
    <property type="entry name" value="Methyl-CpG-binding domain protein 4"/>
    <property type="match status" value="1"/>
</dbReference>
<dbReference type="FunFam" id="3.30.890.10:FF:000013">
    <property type="entry name" value="Methyl-CpG-binding domain protein 4"/>
    <property type="match status" value="1"/>
</dbReference>
<dbReference type="Gene3D" id="1.10.340.30">
    <property type="entry name" value="Hypothetical protein, domain 2"/>
    <property type="match status" value="1"/>
</dbReference>
<dbReference type="Gene3D" id="3.30.890.10">
    <property type="entry name" value="Methyl-cpg-binding Protein 2, Chain A"/>
    <property type="match status" value="1"/>
</dbReference>
<dbReference type="IDEAL" id="IID50108"/>
<dbReference type="InterPro" id="IPR016177">
    <property type="entry name" value="DNA-bd_dom_sf"/>
</dbReference>
<dbReference type="InterPro" id="IPR011257">
    <property type="entry name" value="DNA_glycosylase"/>
</dbReference>
<dbReference type="InterPro" id="IPR017352">
    <property type="entry name" value="MBD4"/>
</dbReference>
<dbReference type="InterPro" id="IPR045138">
    <property type="entry name" value="MeCP2/MBD4"/>
</dbReference>
<dbReference type="InterPro" id="IPR001739">
    <property type="entry name" value="Methyl_CpG_DNA-bd"/>
</dbReference>
<dbReference type="PANTHER" id="PTHR15074:SF7">
    <property type="entry name" value="METHYL-CPG-BINDING DOMAIN PROTEIN 4"/>
    <property type="match status" value="1"/>
</dbReference>
<dbReference type="PANTHER" id="PTHR15074">
    <property type="entry name" value="METHYL-CPG-BINDING PROTEIN"/>
    <property type="match status" value="1"/>
</dbReference>
<dbReference type="Pfam" id="PF01429">
    <property type="entry name" value="MBD"/>
    <property type="match status" value="1"/>
</dbReference>
<dbReference type="PIRSF" id="PIRSF038005">
    <property type="entry name" value="Methyl_CpG_bd_MBD4"/>
    <property type="match status" value="1"/>
</dbReference>
<dbReference type="SMART" id="SM00391">
    <property type="entry name" value="MBD"/>
    <property type="match status" value="1"/>
</dbReference>
<dbReference type="SUPFAM" id="SSF54171">
    <property type="entry name" value="DNA-binding domain"/>
    <property type="match status" value="1"/>
</dbReference>
<dbReference type="SUPFAM" id="SSF48150">
    <property type="entry name" value="DNA-glycosylase"/>
    <property type="match status" value="1"/>
</dbReference>
<dbReference type="PROSITE" id="PS50982">
    <property type="entry name" value="MBD"/>
    <property type="match status" value="1"/>
</dbReference>
<feature type="chain" id="PRO_0000096265" description="Methyl-CpG-binding domain protein 4">
    <location>
        <begin position="1"/>
        <end position="554"/>
    </location>
</feature>
<feature type="domain" description="MBD" evidence="3">
    <location>
        <begin position="63"/>
        <end position="135"/>
    </location>
</feature>
<feature type="region of interest" description="Disordered" evidence="4">
    <location>
        <begin position="1"/>
        <end position="23"/>
    </location>
</feature>
<feature type="region of interest" description="Disordered" evidence="4">
    <location>
        <begin position="154"/>
        <end position="195"/>
    </location>
</feature>
<feature type="region of interest" description="Disordered" evidence="4">
    <location>
        <begin position="209"/>
        <end position="252"/>
    </location>
</feature>
<feature type="compositionally biased region" description="Polar residues" evidence="4">
    <location>
        <begin position="154"/>
        <end position="164"/>
    </location>
</feature>
<feature type="compositionally biased region" description="Low complexity" evidence="4">
    <location>
        <begin position="178"/>
        <end position="195"/>
    </location>
</feature>
<feature type="active site" evidence="1">
    <location>
        <position position="534"/>
    </location>
</feature>
<feature type="modified residue" description="Phosphoserine" evidence="2">
    <location>
        <position position="296"/>
    </location>
</feature>
<feature type="modified residue" description="Phosphoserine" evidence="2">
    <location>
        <position position="402"/>
    </location>
</feature>
<feature type="sequence conflict" description="In Ref. 3; AAH24812." evidence="6" ref="3">
    <original>N</original>
    <variation>D</variation>
    <location>
        <position position="129"/>
    </location>
</feature>
<feature type="strand" evidence="8">
    <location>
        <begin position="78"/>
        <end position="83"/>
    </location>
</feature>
<feature type="turn" evidence="8">
    <location>
        <begin position="88"/>
        <end position="91"/>
    </location>
</feature>
<feature type="strand" evidence="8">
    <location>
        <begin position="93"/>
        <end position="98"/>
    </location>
</feature>
<feature type="strand" evidence="9">
    <location>
        <begin position="104"/>
        <end position="107"/>
    </location>
</feature>
<feature type="helix" evidence="8">
    <location>
        <begin position="108"/>
        <end position="118"/>
    </location>
</feature>
<feature type="helix" evidence="8">
    <location>
        <begin position="125"/>
        <end position="127"/>
    </location>
</feature>
<feature type="helix" evidence="7">
    <location>
        <begin position="423"/>
        <end position="426"/>
    </location>
</feature>
<feature type="helix" evidence="7">
    <location>
        <begin position="430"/>
        <end position="440"/>
    </location>
</feature>
<feature type="helix" evidence="7">
    <location>
        <begin position="445"/>
        <end position="458"/>
    </location>
</feature>
<feature type="helix" evidence="7">
    <location>
        <begin position="462"/>
        <end position="467"/>
    </location>
</feature>
<feature type="helix" evidence="7">
    <location>
        <begin position="470"/>
        <end position="476"/>
    </location>
</feature>
<feature type="helix" evidence="7">
    <location>
        <begin position="478"/>
        <end position="480"/>
    </location>
</feature>
<feature type="helix" evidence="7">
    <location>
        <begin position="483"/>
        <end position="499"/>
    </location>
</feature>
<feature type="helix" evidence="7">
    <location>
        <begin position="505"/>
        <end position="507"/>
    </location>
</feature>
<feature type="helix" evidence="7">
    <location>
        <begin position="513"/>
        <end position="522"/>
    </location>
</feature>
<feature type="helix" evidence="7">
    <location>
        <begin position="527"/>
        <end position="529"/>
    </location>
</feature>
<feature type="helix" evidence="7">
    <location>
        <begin position="535"/>
        <end position="551"/>
    </location>
</feature>
<keyword id="KW-0002">3D-structure</keyword>
<keyword id="KW-0227">DNA damage</keyword>
<keyword id="KW-0234">DNA repair</keyword>
<keyword id="KW-0238">DNA-binding</keyword>
<keyword id="KW-0378">Hydrolase</keyword>
<keyword id="KW-0539">Nucleus</keyword>
<keyword id="KW-0597">Phosphoprotein</keyword>
<keyword id="KW-1185">Reference proteome</keyword>
<proteinExistence type="evidence at protein level"/>